<name>NUSB_BRUMB</name>
<sequence>MNSIPEGRPTPNLPRTANKRGVARLAAVQALFQMDVAGTGVMEVVAEYEAFRLGKEVDGTQYLDADPQWFRAIVAGVVEDQLKLDPMIHQALTEDWPLSRLDSTLRAILRAGAWELKARKDVPTAVIVSEYVDIAKAFYTEDEPKLVNAVLDRLALVIRGESRGAKPRHKS</sequence>
<accession>C0RIA7</accession>
<comment type="function">
    <text evidence="1">Involved in transcription antitermination. Required for transcription of ribosomal RNA (rRNA) genes. Binds specifically to the boxA antiterminator sequence of the ribosomal RNA (rrn) operons.</text>
</comment>
<comment type="similarity">
    <text evidence="1">Belongs to the NusB family.</text>
</comment>
<feature type="chain" id="PRO_1000192418" description="Transcription antitermination protein NusB">
    <location>
        <begin position="1"/>
        <end position="171"/>
    </location>
</feature>
<reference key="1">
    <citation type="submission" date="2009-03" db="EMBL/GenBank/DDBJ databases">
        <title>Brucella melitensis ATCC 23457 whole genome shotgun sequencing project.</title>
        <authorList>
            <person name="Setubal J.C."/>
            <person name="Boyle S."/>
            <person name="Crasta O.R."/>
            <person name="Gillespie J.J."/>
            <person name="Kenyon R.W."/>
            <person name="Lu J."/>
            <person name="Mane S."/>
            <person name="Nagrani S."/>
            <person name="Shallom J.M."/>
            <person name="Shallom S."/>
            <person name="Shukla M."/>
            <person name="Snyder E.E."/>
            <person name="Sobral B.W."/>
            <person name="Wattam A.R."/>
            <person name="Will R."/>
            <person name="Williams K."/>
            <person name="Yoo H."/>
            <person name="Munk C."/>
            <person name="Tapia R."/>
            <person name="Han C."/>
            <person name="Detter J.C."/>
            <person name="Bruce D."/>
            <person name="Brettin T.S."/>
        </authorList>
    </citation>
    <scope>NUCLEOTIDE SEQUENCE [LARGE SCALE GENOMIC DNA]</scope>
    <source>
        <strain>ATCC 23457</strain>
    </source>
</reference>
<organism>
    <name type="scientific">Brucella melitensis biotype 2 (strain ATCC 23457)</name>
    <dbReference type="NCBI Taxonomy" id="546272"/>
    <lineage>
        <taxon>Bacteria</taxon>
        <taxon>Pseudomonadati</taxon>
        <taxon>Pseudomonadota</taxon>
        <taxon>Alphaproteobacteria</taxon>
        <taxon>Hyphomicrobiales</taxon>
        <taxon>Brucellaceae</taxon>
        <taxon>Brucella/Ochrobactrum group</taxon>
        <taxon>Brucella</taxon>
    </lineage>
</organism>
<protein>
    <recommendedName>
        <fullName evidence="1">Transcription antitermination protein NusB</fullName>
    </recommendedName>
    <alternativeName>
        <fullName evidence="1">Antitermination factor NusB</fullName>
    </alternativeName>
</protein>
<evidence type="ECO:0000255" key="1">
    <source>
        <dbReference type="HAMAP-Rule" id="MF_00073"/>
    </source>
</evidence>
<keyword id="KW-0694">RNA-binding</keyword>
<keyword id="KW-0804">Transcription</keyword>
<keyword id="KW-0889">Transcription antitermination</keyword>
<keyword id="KW-0805">Transcription regulation</keyword>
<proteinExistence type="inferred from homology"/>
<gene>
    <name evidence="1" type="primary">nusB</name>
    <name type="ordered locus">BMEA_A0809</name>
</gene>
<dbReference type="EMBL" id="CP001488">
    <property type="protein sequence ID" value="ACO00565.1"/>
    <property type="molecule type" value="Genomic_DNA"/>
</dbReference>
<dbReference type="RefSeq" id="WP_002963907.1">
    <property type="nucleotide sequence ID" value="NC_012441.1"/>
</dbReference>
<dbReference type="SMR" id="C0RIA7"/>
<dbReference type="GeneID" id="93016840"/>
<dbReference type="KEGG" id="bmi:BMEA_A0809"/>
<dbReference type="HOGENOM" id="CLU_087843_4_0_5"/>
<dbReference type="Proteomes" id="UP000001748">
    <property type="component" value="Chromosome I"/>
</dbReference>
<dbReference type="GO" id="GO:0005829">
    <property type="term" value="C:cytosol"/>
    <property type="evidence" value="ECO:0007669"/>
    <property type="project" value="TreeGrafter"/>
</dbReference>
<dbReference type="GO" id="GO:0003723">
    <property type="term" value="F:RNA binding"/>
    <property type="evidence" value="ECO:0007669"/>
    <property type="project" value="UniProtKB-UniRule"/>
</dbReference>
<dbReference type="GO" id="GO:0006353">
    <property type="term" value="P:DNA-templated transcription termination"/>
    <property type="evidence" value="ECO:0007669"/>
    <property type="project" value="UniProtKB-UniRule"/>
</dbReference>
<dbReference type="GO" id="GO:0031564">
    <property type="term" value="P:transcription antitermination"/>
    <property type="evidence" value="ECO:0007669"/>
    <property type="project" value="UniProtKB-KW"/>
</dbReference>
<dbReference type="Gene3D" id="1.10.940.10">
    <property type="entry name" value="NusB-like"/>
    <property type="match status" value="1"/>
</dbReference>
<dbReference type="HAMAP" id="MF_00073">
    <property type="entry name" value="NusB"/>
    <property type="match status" value="1"/>
</dbReference>
<dbReference type="InterPro" id="IPR035926">
    <property type="entry name" value="NusB-like_sf"/>
</dbReference>
<dbReference type="InterPro" id="IPR011605">
    <property type="entry name" value="NusB_fam"/>
</dbReference>
<dbReference type="InterPro" id="IPR006027">
    <property type="entry name" value="NusB_RsmB_TIM44"/>
</dbReference>
<dbReference type="NCBIfam" id="TIGR01951">
    <property type="entry name" value="nusB"/>
    <property type="match status" value="1"/>
</dbReference>
<dbReference type="PANTHER" id="PTHR11078:SF3">
    <property type="entry name" value="ANTITERMINATION NUSB DOMAIN-CONTAINING PROTEIN"/>
    <property type="match status" value="1"/>
</dbReference>
<dbReference type="PANTHER" id="PTHR11078">
    <property type="entry name" value="N UTILIZATION SUBSTANCE PROTEIN B-RELATED"/>
    <property type="match status" value="1"/>
</dbReference>
<dbReference type="Pfam" id="PF01029">
    <property type="entry name" value="NusB"/>
    <property type="match status" value="1"/>
</dbReference>
<dbReference type="SUPFAM" id="SSF48013">
    <property type="entry name" value="NusB-like"/>
    <property type="match status" value="1"/>
</dbReference>